<evidence type="ECO:0000255" key="1">
    <source>
        <dbReference type="HAMAP-Rule" id="MF_00321"/>
    </source>
</evidence>
<name>ENGB_LIMF3</name>
<protein>
    <recommendedName>
        <fullName evidence="1">Probable GTP-binding protein EngB</fullName>
    </recommendedName>
</protein>
<sequence length="197" mass="22264">MQVHDVELTISAVEENQYPATALPELALVGRSNVGKSSLTNVLINRKNYAHTSGQPGKTQTLNFYEVEHKLYFVDVPGYGYAKVSKKQREKFGKMIENYLTTREQLRGVVQLVDGRHAPTEDDRMMFQWLAYYHIPTLVVATKVDKVKPNAHNRIVKVVKEGLGAAKDQDLILFSATTKKGAESVWQWIEERTGVSD</sequence>
<organism>
    <name type="scientific">Limosilactobacillus fermentum (strain NBRC 3956 / LMG 18251)</name>
    <name type="common">Lactobacillus fermentum</name>
    <dbReference type="NCBI Taxonomy" id="334390"/>
    <lineage>
        <taxon>Bacteria</taxon>
        <taxon>Bacillati</taxon>
        <taxon>Bacillota</taxon>
        <taxon>Bacilli</taxon>
        <taxon>Lactobacillales</taxon>
        <taxon>Lactobacillaceae</taxon>
        <taxon>Limosilactobacillus</taxon>
    </lineage>
</organism>
<dbReference type="EMBL" id="AP008937">
    <property type="protein sequence ID" value="BAG26957.1"/>
    <property type="molecule type" value="Genomic_DNA"/>
</dbReference>
<dbReference type="RefSeq" id="WP_012391020.1">
    <property type="nucleotide sequence ID" value="NC_010610.1"/>
</dbReference>
<dbReference type="SMR" id="B2GBC5"/>
<dbReference type="GeneID" id="83715046"/>
<dbReference type="KEGG" id="lfe:LAF_0621"/>
<dbReference type="eggNOG" id="COG0218">
    <property type="taxonomic scope" value="Bacteria"/>
</dbReference>
<dbReference type="HOGENOM" id="CLU_033732_3_0_9"/>
<dbReference type="Proteomes" id="UP000001697">
    <property type="component" value="Chromosome"/>
</dbReference>
<dbReference type="GO" id="GO:0005829">
    <property type="term" value="C:cytosol"/>
    <property type="evidence" value="ECO:0007669"/>
    <property type="project" value="TreeGrafter"/>
</dbReference>
<dbReference type="GO" id="GO:0005525">
    <property type="term" value="F:GTP binding"/>
    <property type="evidence" value="ECO:0007669"/>
    <property type="project" value="UniProtKB-UniRule"/>
</dbReference>
<dbReference type="GO" id="GO:0046872">
    <property type="term" value="F:metal ion binding"/>
    <property type="evidence" value="ECO:0007669"/>
    <property type="project" value="UniProtKB-KW"/>
</dbReference>
<dbReference type="GO" id="GO:0000917">
    <property type="term" value="P:division septum assembly"/>
    <property type="evidence" value="ECO:0007669"/>
    <property type="project" value="UniProtKB-KW"/>
</dbReference>
<dbReference type="CDD" id="cd01876">
    <property type="entry name" value="YihA_EngB"/>
    <property type="match status" value="1"/>
</dbReference>
<dbReference type="FunFam" id="3.40.50.300:FF:000098">
    <property type="entry name" value="Probable GTP-binding protein EngB"/>
    <property type="match status" value="1"/>
</dbReference>
<dbReference type="Gene3D" id="3.40.50.300">
    <property type="entry name" value="P-loop containing nucleotide triphosphate hydrolases"/>
    <property type="match status" value="1"/>
</dbReference>
<dbReference type="HAMAP" id="MF_00321">
    <property type="entry name" value="GTPase_EngB"/>
    <property type="match status" value="1"/>
</dbReference>
<dbReference type="InterPro" id="IPR030393">
    <property type="entry name" value="G_ENGB_dom"/>
</dbReference>
<dbReference type="InterPro" id="IPR006073">
    <property type="entry name" value="GTP-bd"/>
</dbReference>
<dbReference type="InterPro" id="IPR019987">
    <property type="entry name" value="GTP-bd_ribosome_bio_YsxC"/>
</dbReference>
<dbReference type="InterPro" id="IPR027417">
    <property type="entry name" value="P-loop_NTPase"/>
</dbReference>
<dbReference type="InterPro" id="IPR005225">
    <property type="entry name" value="Small_GTP-bd"/>
</dbReference>
<dbReference type="NCBIfam" id="TIGR03598">
    <property type="entry name" value="GTPase_YsxC"/>
    <property type="match status" value="1"/>
</dbReference>
<dbReference type="NCBIfam" id="TIGR00231">
    <property type="entry name" value="small_GTP"/>
    <property type="match status" value="1"/>
</dbReference>
<dbReference type="PANTHER" id="PTHR11649:SF13">
    <property type="entry name" value="ENGB-TYPE G DOMAIN-CONTAINING PROTEIN"/>
    <property type="match status" value="1"/>
</dbReference>
<dbReference type="PANTHER" id="PTHR11649">
    <property type="entry name" value="MSS1/TRME-RELATED GTP-BINDING PROTEIN"/>
    <property type="match status" value="1"/>
</dbReference>
<dbReference type="Pfam" id="PF01926">
    <property type="entry name" value="MMR_HSR1"/>
    <property type="match status" value="1"/>
</dbReference>
<dbReference type="SUPFAM" id="SSF52540">
    <property type="entry name" value="P-loop containing nucleoside triphosphate hydrolases"/>
    <property type="match status" value="1"/>
</dbReference>
<dbReference type="PROSITE" id="PS51706">
    <property type="entry name" value="G_ENGB"/>
    <property type="match status" value="1"/>
</dbReference>
<reference key="1">
    <citation type="journal article" date="2008" name="DNA Res.">
        <title>Comparative genome analysis of Lactobacillus reuteri and Lactobacillus fermentum reveal a genomic island for reuterin and cobalamin production.</title>
        <authorList>
            <person name="Morita H."/>
            <person name="Toh H."/>
            <person name="Fukuda S."/>
            <person name="Horikawa H."/>
            <person name="Oshima K."/>
            <person name="Suzuki T."/>
            <person name="Murakami M."/>
            <person name="Hisamatsu S."/>
            <person name="Kato Y."/>
            <person name="Takizawa T."/>
            <person name="Fukuoka H."/>
            <person name="Yoshimura T."/>
            <person name="Itoh K."/>
            <person name="O'Sullivan D.J."/>
            <person name="McKay L.L."/>
            <person name="Ohno H."/>
            <person name="Kikuchi J."/>
            <person name="Masaoka T."/>
            <person name="Hattori M."/>
        </authorList>
    </citation>
    <scope>NUCLEOTIDE SEQUENCE [LARGE SCALE GENOMIC DNA]</scope>
    <source>
        <strain>NBRC 3956 / LMG 18251</strain>
    </source>
</reference>
<comment type="function">
    <text evidence="1">Necessary for normal cell division and for the maintenance of normal septation.</text>
</comment>
<comment type="cofactor">
    <cofactor evidence="1">
        <name>Mg(2+)</name>
        <dbReference type="ChEBI" id="CHEBI:18420"/>
    </cofactor>
</comment>
<comment type="similarity">
    <text evidence="1">Belongs to the TRAFAC class TrmE-Era-EngA-EngB-Septin-like GTPase superfamily. EngB GTPase family.</text>
</comment>
<proteinExistence type="inferred from homology"/>
<gene>
    <name evidence="1" type="primary">engB</name>
    <name type="ordered locus">LAF_0621</name>
</gene>
<accession>B2GBC5</accession>
<feature type="chain" id="PRO_1000115983" description="Probable GTP-binding protein EngB">
    <location>
        <begin position="1"/>
        <end position="197"/>
    </location>
</feature>
<feature type="domain" description="EngB-type G" evidence="1">
    <location>
        <begin position="22"/>
        <end position="195"/>
    </location>
</feature>
<feature type="binding site" evidence="1">
    <location>
        <begin position="30"/>
        <end position="37"/>
    </location>
    <ligand>
        <name>GTP</name>
        <dbReference type="ChEBI" id="CHEBI:37565"/>
    </ligand>
</feature>
<feature type="binding site" evidence="1">
    <location>
        <position position="37"/>
    </location>
    <ligand>
        <name>Mg(2+)</name>
        <dbReference type="ChEBI" id="CHEBI:18420"/>
    </ligand>
</feature>
<feature type="binding site" evidence="1">
    <location>
        <begin position="57"/>
        <end position="61"/>
    </location>
    <ligand>
        <name>GTP</name>
        <dbReference type="ChEBI" id="CHEBI:37565"/>
    </ligand>
</feature>
<feature type="binding site" evidence="1">
    <location>
        <position position="59"/>
    </location>
    <ligand>
        <name>Mg(2+)</name>
        <dbReference type="ChEBI" id="CHEBI:18420"/>
    </ligand>
</feature>
<feature type="binding site" evidence="1">
    <location>
        <begin position="75"/>
        <end position="78"/>
    </location>
    <ligand>
        <name>GTP</name>
        <dbReference type="ChEBI" id="CHEBI:37565"/>
    </ligand>
</feature>
<feature type="binding site" evidence="1">
    <location>
        <begin position="142"/>
        <end position="145"/>
    </location>
    <ligand>
        <name>GTP</name>
        <dbReference type="ChEBI" id="CHEBI:37565"/>
    </ligand>
</feature>
<feature type="binding site" evidence="1">
    <location>
        <begin position="174"/>
        <end position="176"/>
    </location>
    <ligand>
        <name>GTP</name>
        <dbReference type="ChEBI" id="CHEBI:37565"/>
    </ligand>
</feature>
<keyword id="KW-0131">Cell cycle</keyword>
<keyword id="KW-0132">Cell division</keyword>
<keyword id="KW-0342">GTP-binding</keyword>
<keyword id="KW-0460">Magnesium</keyword>
<keyword id="KW-0479">Metal-binding</keyword>
<keyword id="KW-0547">Nucleotide-binding</keyword>
<keyword id="KW-1185">Reference proteome</keyword>
<keyword id="KW-0717">Septation</keyword>